<proteinExistence type="inferred from homology"/>
<comment type="function">
    <text evidence="1">Involved in the biogenesis of TorA. Acts on TorA before the insertion of the molybdenum cofactor and, as a result, probably favors a conformation of the apoenzyme that is competent for acquiring the cofactor.</text>
</comment>
<comment type="subcellular location">
    <subcellularLocation>
        <location evidence="1">Cytoplasm</location>
    </subcellularLocation>
</comment>
<comment type="similarity">
    <text evidence="1">Belongs to the TorD/DmsD family. TorD subfamily.</text>
</comment>
<evidence type="ECO:0000255" key="1">
    <source>
        <dbReference type="HAMAP-Rule" id="MF_01150"/>
    </source>
</evidence>
<sequence length="199" mass="22601">MTTLTAQQIACVYAWLAQLFSRELDDEQLTQIASAQMAEWFSLLKNEPPLTAAVNELENRIATLTVRDDARLELAADFCGLFLMTDKQAALPYASAYKQDEQEIKRLLVEAGMETSGNFNEPADHLAIYLELLSHLHFSLGEGTVPARRIDSLRQKTLTALWQWLPEFVARCRQYDSFGFYAALSQLLLVLVECDHQNR</sequence>
<organism>
    <name type="scientific">Escherichia coli (strain K12 / DH10B)</name>
    <dbReference type="NCBI Taxonomy" id="316385"/>
    <lineage>
        <taxon>Bacteria</taxon>
        <taxon>Pseudomonadati</taxon>
        <taxon>Pseudomonadota</taxon>
        <taxon>Gammaproteobacteria</taxon>
        <taxon>Enterobacterales</taxon>
        <taxon>Enterobacteriaceae</taxon>
        <taxon>Escherichia</taxon>
    </lineage>
</organism>
<reference key="1">
    <citation type="journal article" date="2008" name="J. Bacteriol.">
        <title>The complete genome sequence of Escherichia coli DH10B: insights into the biology of a laboratory workhorse.</title>
        <authorList>
            <person name="Durfee T."/>
            <person name="Nelson R."/>
            <person name="Baldwin S."/>
            <person name="Plunkett G. III"/>
            <person name="Burland V."/>
            <person name="Mau B."/>
            <person name="Petrosino J.F."/>
            <person name="Qin X."/>
            <person name="Muzny D.M."/>
            <person name="Ayele M."/>
            <person name="Gibbs R.A."/>
            <person name="Csorgo B."/>
            <person name="Posfai G."/>
            <person name="Weinstock G.M."/>
            <person name="Blattner F.R."/>
        </authorList>
    </citation>
    <scope>NUCLEOTIDE SEQUENCE [LARGE SCALE GENOMIC DNA]</scope>
    <source>
        <strain>K12 / DH10B</strain>
    </source>
</reference>
<feature type="chain" id="PRO_1000137507" description="Chaperone protein TorD">
    <location>
        <begin position="1"/>
        <end position="199"/>
    </location>
</feature>
<keyword id="KW-0143">Chaperone</keyword>
<keyword id="KW-0963">Cytoplasm</keyword>
<gene>
    <name evidence="1" type="primary">torD</name>
    <name type="ordered locus">ECDH10B_1070</name>
</gene>
<accession>B1X8V3</accession>
<protein>
    <recommendedName>
        <fullName evidence="1">Chaperone protein TorD</fullName>
    </recommendedName>
</protein>
<dbReference type="EMBL" id="CP000948">
    <property type="protein sequence ID" value="ACB02199.1"/>
    <property type="molecule type" value="Genomic_DNA"/>
</dbReference>
<dbReference type="RefSeq" id="WP_000209861.1">
    <property type="nucleotide sequence ID" value="NC_010473.1"/>
</dbReference>
<dbReference type="SMR" id="B1X8V3"/>
<dbReference type="KEGG" id="ecd:ECDH10B_1070"/>
<dbReference type="HOGENOM" id="CLU_077650_4_0_6"/>
<dbReference type="GO" id="GO:0005737">
    <property type="term" value="C:cytoplasm"/>
    <property type="evidence" value="ECO:0007669"/>
    <property type="project" value="UniProtKB-SubCell"/>
</dbReference>
<dbReference type="GO" id="GO:0051259">
    <property type="term" value="P:protein complex oligomerization"/>
    <property type="evidence" value="ECO:0007669"/>
    <property type="project" value="InterPro"/>
</dbReference>
<dbReference type="GO" id="GO:0006457">
    <property type="term" value="P:protein folding"/>
    <property type="evidence" value="ECO:0007669"/>
    <property type="project" value="UniProtKB-UniRule"/>
</dbReference>
<dbReference type="FunFam" id="1.20.120.1820:FF:000001">
    <property type="entry name" value="Chaperone protein TorD"/>
    <property type="match status" value="1"/>
</dbReference>
<dbReference type="FunFam" id="1.20.1280.20:FF:000003">
    <property type="entry name" value="Chaperone protein TorD"/>
    <property type="match status" value="1"/>
</dbReference>
<dbReference type="Gene3D" id="1.20.120.1820">
    <property type="match status" value="1"/>
</dbReference>
<dbReference type="Gene3D" id="1.20.1280.20">
    <property type="entry name" value="HscB, C-terminal domain"/>
    <property type="match status" value="1"/>
</dbReference>
<dbReference type="HAMAP" id="MF_01150">
    <property type="entry name" value="TorD"/>
    <property type="match status" value="1"/>
</dbReference>
<dbReference type="InterPro" id="IPR023069">
    <property type="entry name" value="Chaperone_TorD"/>
</dbReference>
<dbReference type="InterPro" id="IPR020945">
    <property type="entry name" value="DMSO/NO3_reduct_chaperone"/>
</dbReference>
<dbReference type="InterPro" id="IPR036386">
    <property type="entry name" value="HscB_C_sf"/>
</dbReference>
<dbReference type="InterPro" id="IPR036411">
    <property type="entry name" value="TorD-like_sf"/>
</dbReference>
<dbReference type="InterPro" id="IPR050289">
    <property type="entry name" value="TorD/DmsD_chaperones"/>
</dbReference>
<dbReference type="NCBIfam" id="NF003442">
    <property type="entry name" value="PRK04976.1"/>
    <property type="match status" value="1"/>
</dbReference>
<dbReference type="PANTHER" id="PTHR34227:SF11">
    <property type="entry name" value="CHAPERONE PROTEIN TORD"/>
    <property type="match status" value="1"/>
</dbReference>
<dbReference type="PANTHER" id="PTHR34227">
    <property type="entry name" value="CHAPERONE PROTEIN YCDY"/>
    <property type="match status" value="1"/>
</dbReference>
<dbReference type="Pfam" id="PF02613">
    <property type="entry name" value="Nitrate_red_del"/>
    <property type="match status" value="1"/>
</dbReference>
<dbReference type="SUPFAM" id="SSF89155">
    <property type="entry name" value="TorD-like"/>
    <property type="match status" value="1"/>
</dbReference>
<name>TORD_ECODH</name>